<evidence type="ECO:0000250" key="1"/>
<evidence type="ECO:0000305" key="2"/>
<comment type="function">
    <text evidence="1">One of the primary rRNA binding proteins, it binds directly to 16S rRNA central domain where it helps coordinate assembly of the platform of the 30S subunit.</text>
</comment>
<comment type="subunit">
    <text evidence="1">Part of the 30S ribosomal subunit.</text>
</comment>
<comment type="subcellular location">
    <subcellularLocation>
        <location>Plastid</location>
        <location>Chloroplast</location>
    </subcellularLocation>
</comment>
<comment type="similarity">
    <text evidence="2">Belongs to the universal ribosomal protein uS8 family.</text>
</comment>
<proteinExistence type="inferred from homology"/>
<accession>Q33BZ7</accession>
<organism>
    <name type="scientific">Nicotiana tomentosiformis</name>
    <name type="common">Tobacco</name>
    <dbReference type="NCBI Taxonomy" id="4098"/>
    <lineage>
        <taxon>Eukaryota</taxon>
        <taxon>Viridiplantae</taxon>
        <taxon>Streptophyta</taxon>
        <taxon>Embryophyta</taxon>
        <taxon>Tracheophyta</taxon>
        <taxon>Spermatophyta</taxon>
        <taxon>Magnoliopsida</taxon>
        <taxon>eudicotyledons</taxon>
        <taxon>Gunneridae</taxon>
        <taxon>Pentapetalae</taxon>
        <taxon>asterids</taxon>
        <taxon>lamiids</taxon>
        <taxon>Solanales</taxon>
        <taxon>Solanaceae</taxon>
        <taxon>Nicotianoideae</taxon>
        <taxon>Nicotianeae</taxon>
        <taxon>Nicotiana</taxon>
    </lineage>
</organism>
<protein>
    <recommendedName>
        <fullName evidence="2">Small ribosomal subunit protein uS8c</fullName>
    </recommendedName>
    <alternativeName>
        <fullName>30S ribosomal protein S8, chloroplastic</fullName>
    </alternativeName>
</protein>
<feature type="chain" id="PRO_0000225910" description="Small ribosomal subunit protein uS8c">
    <location>
        <begin position="1"/>
        <end position="134"/>
    </location>
</feature>
<sequence>MGRDTIAEIITSIRNADMDRKRVVRIASTNITENIVQILLREGFIENVRKHRENNKYFLVLTLRYRRNRKRPYRNILNLKRISRPGLRIYSNYQRIPRILGGMGIVILSTSRGIMTDREARLEGIGGEILCYIW</sequence>
<geneLocation type="chloroplast"/>
<name>RR8_NICTO</name>
<keyword id="KW-0150">Chloroplast</keyword>
<keyword id="KW-0934">Plastid</keyword>
<keyword id="KW-0687">Ribonucleoprotein</keyword>
<keyword id="KW-0689">Ribosomal protein</keyword>
<keyword id="KW-0694">RNA-binding</keyword>
<keyword id="KW-0699">rRNA-binding</keyword>
<dbReference type="EMBL" id="AB240139">
    <property type="protein sequence ID" value="BAE48038.1"/>
    <property type="molecule type" value="Genomic_DNA"/>
</dbReference>
<dbReference type="RefSeq" id="YP_398899.1">
    <property type="nucleotide sequence ID" value="NC_007602.1"/>
</dbReference>
<dbReference type="SMR" id="Q33BZ7"/>
<dbReference type="GeneID" id="3776393"/>
<dbReference type="KEGG" id="nto:3776393"/>
<dbReference type="OrthoDB" id="409928at2759"/>
<dbReference type="GO" id="GO:0009507">
    <property type="term" value="C:chloroplast"/>
    <property type="evidence" value="ECO:0007669"/>
    <property type="project" value="UniProtKB-SubCell"/>
</dbReference>
<dbReference type="GO" id="GO:1990904">
    <property type="term" value="C:ribonucleoprotein complex"/>
    <property type="evidence" value="ECO:0007669"/>
    <property type="project" value="UniProtKB-KW"/>
</dbReference>
<dbReference type="GO" id="GO:0005840">
    <property type="term" value="C:ribosome"/>
    <property type="evidence" value="ECO:0007669"/>
    <property type="project" value="UniProtKB-KW"/>
</dbReference>
<dbReference type="GO" id="GO:0019843">
    <property type="term" value="F:rRNA binding"/>
    <property type="evidence" value="ECO:0007669"/>
    <property type="project" value="UniProtKB-UniRule"/>
</dbReference>
<dbReference type="GO" id="GO:0003735">
    <property type="term" value="F:structural constituent of ribosome"/>
    <property type="evidence" value="ECO:0007669"/>
    <property type="project" value="InterPro"/>
</dbReference>
<dbReference type="GO" id="GO:0006412">
    <property type="term" value="P:translation"/>
    <property type="evidence" value="ECO:0007669"/>
    <property type="project" value="UniProtKB-UniRule"/>
</dbReference>
<dbReference type="FunFam" id="3.30.1490.10:FF:000001">
    <property type="entry name" value="30S ribosomal protein S8"/>
    <property type="match status" value="1"/>
</dbReference>
<dbReference type="FunFam" id="3.30.1370.30:FF:000004">
    <property type="entry name" value="30S ribosomal protein S8, chloroplastic"/>
    <property type="match status" value="1"/>
</dbReference>
<dbReference type="Gene3D" id="3.30.1370.30">
    <property type="match status" value="1"/>
</dbReference>
<dbReference type="Gene3D" id="3.30.1490.10">
    <property type="match status" value="1"/>
</dbReference>
<dbReference type="HAMAP" id="MF_01302_B">
    <property type="entry name" value="Ribosomal_uS8_B"/>
    <property type="match status" value="1"/>
</dbReference>
<dbReference type="InterPro" id="IPR000630">
    <property type="entry name" value="Ribosomal_uS8"/>
</dbReference>
<dbReference type="InterPro" id="IPR047863">
    <property type="entry name" value="Ribosomal_uS8_CS"/>
</dbReference>
<dbReference type="InterPro" id="IPR035987">
    <property type="entry name" value="Ribosomal_uS8_sf"/>
</dbReference>
<dbReference type="NCBIfam" id="NF001109">
    <property type="entry name" value="PRK00136.1"/>
    <property type="match status" value="1"/>
</dbReference>
<dbReference type="PANTHER" id="PTHR11758">
    <property type="entry name" value="40S RIBOSOMAL PROTEIN S15A"/>
    <property type="match status" value="1"/>
</dbReference>
<dbReference type="Pfam" id="PF00410">
    <property type="entry name" value="Ribosomal_S8"/>
    <property type="match status" value="1"/>
</dbReference>
<dbReference type="SUPFAM" id="SSF56047">
    <property type="entry name" value="Ribosomal protein S8"/>
    <property type="match status" value="1"/>
</dbReference>
<dbReference type="PROSITE" id="PS00053">
    <property type="entry name" value="RIBOSOMAL_S8"/>
    <property type="match status" value="1"/>
</dbReference>
<reference key="1">
    <citation type="journal article" date="2006" name="Mol. Genet. Genomics">
        <title>The chloroplast genome of Nicotiana sylvestris and Nicotiana tomentosiformis: complete sequencing confirms that the Nicotiana sylvestris progenitor is the maternal genome donor of Nicotiana tabacum.</title>
        <authorList>
            <person name="Yukawa M."/>
            <person name="Tsudzuki T."/>
            <person name="Sugiura M."/>
        </authorList>
    </citation>
    <scope>NUCLEOTIDE SEQUENCE [LARGE SCALE GENOMIC DNA]</scope>
</reference>
<gene>
    <name type="primary">rps8</name>
</gene>